<feature type="chain" id="PRO_0000283188" description="F-box/kelch-repeat protein At1g67480">
    <location>
        <begin position="1"/>
        <end position="376"/>
    </location>
</feature>
<feature type="domain" description="F-box">
    <location>
        <begin position="37"/>
        <end position="85"/>
    </location>
</feature>
<feature type="repeat" description="Kelch 1">
    <location>
        <begin position="139"/>
        <end position="189"/>
    </location>
</feature>
<feature type="repeat" description="Kelch 2">
    <location>
        <begin position="190"/>
        <end position="237"/>
    </location>
</feature>
<feature type="repeat" description="Kelch 3">
    <location>
        <begin position="239"/>
        <end position="289"/>
    </location>
</feature>
<feature type="repeat" description="Kelch 4">
    <location>
        <begin position="291"/>
        <end position="335"/>
    </location>
</feature>
<accession>Q9CAG8</accession>
<accession>O64797</accession>
<name>FBK28_ARATH</name>
<protein>
    <recommendedName>
        <fullName>F-box/kelch-repeat protein At1g67480</fullName>
    </recommendedName>
</protein>
<comment type="sequence caution" evidence="1">
    <conflict type="erroneous gene model prediction">
        <sequence resource="EMBL-CDS" id="AAC18788"/>
    </conflict>
</comment>
<dbReference type="EMBL" id="AC004393">
    <property type="protein sequence ID" value="AAC18788.1"/>
    <property type="status" value="ALT_SEQ"/>
    <property type="molecule type" value="Genomic_DNA"/>
</dbReference>
<dbReference type="EMBL" id="AC011020">
    <property type="protein sequence ID" value="AAG52295.1"/>
    <property type="molecule type" value="Genomic_DNA"/>
</dbReference>
<dbReference type="EMBL" id="CP002684">
    <property type="protein sequence ID" value="AEE34651.1"/>
    <property type="molecule type" value="Genomic_DNA"/>
</dbReference>
<dbReference type="EMBL" id="CP002684">
    <property type="protein sequence ID" value="AEE34652.1"/>
    <property type="molecule type" value="Genomic_DNA"/>
</dbReference>
<dbReference type="EMBL" id="CP002684">
    <property type="protein sequence ID" value="ANM61134.1"/>
    <property type="molecule type" value="Genomic_DNA"/>
</dbReference>
<dbReference type="EMBL" id="AK228988">
    <property type="protein sequence ID" value="BAF00876.1"/>
    <property type="molecule type" value="mRNA"/>
</dbReference>
<dbReference type="EMBL" id="BT029730">
    <property type="protein sequence ID" value="ABM06000.1"/>
    <property type="molecule type" value="mRNA"/>
</dbReference>
<dbReference type="PIR" id="B96698">
    <property type="entry name" value="B96698"/>
</dbReference>
<dbReference type="PIR" id="T02157">
    <property type="entry name" value="T02157"/>
</dbReference>
<dbReference type="RefSeq" id="NP_001077785.1">
    <property type="nucleotide sequence ID" value="NM_001084316.2"/>
</dbReference>
<dbReference type="RefSeq" id="NP_001323370.1">
    <property type="nucleotide sequence ID" value="NM_001334300.1"/>
</dbReference>
<dbReference type="RefSeq" id="NP_176915.1">
    <property type="nucleotide sequence ID" value="NM_105415.3"/>
</dbReference>
<dbReference type="SMR" id="Q9CAG8"/>
<dbReference type="FunCoup" id="Q9CAG8">
    <property type="interactions" value="9"/>
</dbReference>
<dbReference type="STRING" id="3702.Q9CAG8"/>
<dbReference type="PaxDb" id="3702-AT1G67480.1"/>
<dbReference type="EnsemblPlants" id="AT1G67480.1">
    <property type="protein sequence ID" value="AT1G67480.1"/>
    <property type="gene ID" value="AT1G67480"/>
</dbReference>
<dbReference type="EnsemblPlants" id="AT1G67480.2">
    <property type="protein sequence ID" value="AT1G67480.2"/>
    <property type="gene ID" value="AT1G67480"/>
</dbReference>
<dbReference type="EnsemblPlants" id="AT1G67480.3">
    <property type="protein sequence ID" value="AT1G67480.3"/>
    <property type="gene ID" value="AT1G67480"/>
</dbReference>
<dbReference type="GeneID" id="843069"/>
<dbReference type="Gramene" id="AT1G67480.1">
    <property type="protein sequence ID" value="AT1G67480.1"/>
    <property type="gene ID" value="AT1G67480"/>
</dbReference>
<dbReference type="Gramene" id="AT1G67480.2">
    <property type="protein sequence ID" value="AT1G67480.2"/>
    <property type="gene ID" value="AT1G67480"/>
</dbReference>
<dbReference type="Gramene" id="AT1G67480.3">
    <property type="protein sequence ID" value="AT1G67480.3"/>
    <property type="gene ID" value="AT1G67480"/>
</dbReference>
<dbReference type="KEGG" id="ath:AT1G67480"/>
<dbReference type="Araport" id="AT1G67480"/>
<dbReference type="TAIR" id="AT1G67480"/>
<dbReference type="eggNOG" id="KOG1072">
    <property type="taxonomic scope" value="Eukaryota"/>
</dbReference>
<dbReference type="HOGENOM" id="CLU_028510_3_0_1"/>
<dbReference type="InParanoid" id="Q9CAG8"/>
<dbReference type="OMA" id="CAGMQLK"/>
<dbReference type="PhylomeDB" id="Q9CAG8"/>
<dbReference type="PRO" id="PR:Q9CAG8"/>
<dbReference type="Proteomes" id="UP000006548">
    <property type="component" value="Chromosome 1"/>
</dbReference>
<dbReference type="ExpressionAtlas" id="Q9CAG8">
    <property type="expression patterns" value="baseline and differential"/>
</dbReference>
<dbReference type="CDD" id="cd22152">
    <property type="entry name" value="F-box_AtAFR-like"/>
    <property type="match status" value="1"/>
</dbReference>
<dbReference type="Gene3D" id="2.120.10.80">
    <property type="entry name" value="Kelch-type beta propeller"/>
    <property type="match status" value="1"/>
</dbReference>
<dbReference type="InterPro" id="IPR036047">
    <property type="entry name" value="F-box-like_dom_sf"/>
</dbReference>
<dbReference type="InterPro" id="IPR001810">
    <property type="entry name" value="F-box_dom"/>
</dbReference>
<dbReference type="InterPro" id="IPR015915">
    <property type="entry name" value="Kelch-typ_b-propeller"/>
</dbReference>
<dbReference type="InterPro" id="IPR006652">
    <property type="entry name" value="Kelch_1"/>
</dbReference>
<dbReference type="PANTHER" id="PTHR46344">
    <property type="entry name" value="OS02G0202900 PROTEIN"/>
    <property type="match status" value="1"/>
</dbReference>
<dbReference type="PANTHER" id="PTHR46344:SF1">
    <property type="entry name" value="OS02G0504900 PROTEIN"/>
    <property type="match status" value="1"/>
</dbReference>
<dbReference type="Pfam" id="PF00646">
    <property type="entry name" value="F-box"/>
    <property type="match status" value="1"/>
</dbReference>
<dbReference type="Pfam" id="PF24681">
    <property type="entry name" value="Kelch_KLHDC2_KLHL20_DRC7"/>
    <property type="match status" value="1"/>
</dbReference>
<dbReference type="SMART" id="SM00612">
    <property type="entry name" value="Kelch"/>
    <property type="match status" value="2"/>
</dbReference>
<dbReference type="SUPFAM" id="SSF81383">
    <property type="entry name" value="F-box domain"/>
    <property type="match status" value="1"/>
</dbReference>
<dbReference type="SUPFAM" id="SSF117281">
    <property type="entry name" value="Kelch motif"/>
    <property type="match status" value="1"/>
</dbReference>
<keyword id="KW-0880">Kelch repeat</keyword>
<keyword id="KW-1185">Reference proteome</keyword>
<keyword id="KW-0677">Repeat</keyword>
<reference key="1">
    <citation type="journal article" date="2000" name="Nature">
        <title>Sequence and analysis of chromosome 1 of the plant Arabidopsis thaliana.</title>
        <authorList>
            <person name="Theologis A."/>
            <person name="Ecker J.R."/>
            <person name="Palm C.J."/>
            <person name="Federspiel N.A."/>
            <person name="Kaul S."/>
            <person name="White O."/>
            <person name="Alonso J."/>
            <person name="Altafi H."/>
            <person name="Araujo R."/>
            <person name="Bowman C.L."/>
            <person name="Brooks S.Y."/>
            <person name="Buehler E."/>
            <person name="Chan A."/>
            <person name="Chao Q."/>
            <person name="Chen H."/>
            <person name="Cheuk R.F."/>
            <person name="Chin C.W."/>
            <person name="Chung M.K."/>
            <person name="Conn L."/>
            <person name="Conway A.B."/>
            <person name="Conway A.R."/>
            <person name="Creasy T.H."/>
            <person name="Dewar K."/>
            <person name="Dunn P."/>
            <person name="Etgu P."/>
            <person name="Feldblyum T.V."/>
            <person name="Feng J.-D."/>
            <person name="Fong B."/>
            <person name="Fujii C.Y."/>
            <person name="Gill J.E."/>
            <person name="Goldsmith A.D."/>
            <person name="Haas B."/>
            <person name="Hansen N.F."/>
            <person name="Hughes B."/>
            <person name="Huizar L."/>
            <person name="Hunter J.L."/>
            <person name="Jenkins J."/>
            <person name="Johnson-Hopson C."/>
            <person name="Khan S."/>
            <person name="Khaykin E."/>
            <person name="Kim C.J."/>
            <person name="Koo H.L."/>
            <person name="Kremenetskaia I."/>
            <person name="Kurtz D.B."/>
            <person name="Kwan A."/>
            <person name="Lam B."/>
            <person name="Langin-Hooper S."/>
            <person name="Lee A."/>
            <person name="Lee J.M."/>
            <person name="Lenz C.A."/>
            <person name="Li J.H."/>
            <person name="Li Y.-P."/>
            <person name="Lin X."/>
            <person name="Liu S.X."/>
            <person name="Liu Z.A."/>
            <person name="Luros J.S."/>
            <person name="Maiti R."/>
            <person name="Marziali A."/>
            <person name="Militscher J."/>
            <person name="Miranda M."/>
            <person name="Nguyen M."/>
            <person name="Nierman W.C."/>
            <person name="Osborne B.I."/>
            <person name="Pai G."/>
            <person name="Peterson J."/>
            <person name="Pham P.K."/>
            <person name="Rizzo M."/>
            <person name="Rooney T."/>
            <person name="Rowley D."/>
            <person name="Sakano H."/>
            <person name="Salzberg S.L."/>
            <person name="Schwartz J.R."/>
            <person name="Shinn P."/>
            <person name="Southwick A.M."/>
            <person name="Sun H."/>
            <person name="Tallon L.J."/>
            <person name="Tambunga G."/>
            <person name="Toriumi M.J."/>
            <person name="Town C.D."/>
            <person name="Utterback T."/>
            <person name="Van Aken S."/>
            <person name="Vaysberg M."/>
            <person name="Vysotskaia V.S."/>
            <person name="Walker M."/>
            <person name="Wu D."/>
            <person name="Yu G."/>
            <person name="Fraser C.M."/>
            <person name="Venter J.C."/>
            <person name="Davis R.W."/>
        </authorList>
    </citation>
    <scope>NUCLEOTIDE SEQUENCE [LARGE SCALE GENOMIC DNA]</scope>
    <source>
        <strain>cv. Columbia</strain>
    </source>
</reference>
<reference key="2">
    <citation type="journal article" date="2017" name="Plant J.">
        <title>Araport11: a complete reannotation of the Arabidopsis thaliana reference genome.</title>
        <authorList>
            <person name="Cheng C.Y."/>
            <person name="Krishnakumar V."/>
            <person name="Chan A.P."/>
            <person name="Thibaud-Nissen F."/>
            <person name="Schobel S."/>
            <person name="Town C.D."/>
        </authorList>
    </citation>
    <scope>GENOME REANNOTATION</scope>
    <source>
        <strain>cv. Columbia</strain>
    </source>
</reference>
<reference key="3">
    <citation type="submission" date="2006-07" db="EMBL/GenBank/DDBJ databases">
        <title>Large-scale analysis of RIKEN Arabidopsis full-length (RAFL) cDNAs.</title>
        <authorList>
            <person name="Totoki Y."/>
            <person name="Seki M."/>
            <person name="Ishida J."/>
            <person name="Nakajima M."/>
            <person name="Enju A."/>
            <person name="Kamiya A."/>
            <person name="Narusaka M."/>
            <person name="Shin-i T."/>
            <person name="Nakagawa M."/>
            <person name="Sakamoto N."/>
            <person name="Oishi K."/>
            <person name="Kohara Y."/>
            <person name="Kobayashi M."/>
            <person name="Toyoda A."/>
            <person name="Sakaki Y."/>
            <person name="Sakurai T."/>
            <person name="Iida K."/>
            <person name="Akiyama K."/>
            <person name="Satou M."/>
            <person name="Toyoda T."/>
            <person name="Konagaya A."/>
            <person name="Carninci P."/>
            <person name="Kawai J."/>
            <person name="Hayashizaki Y."/>
            <person name="Shinozaki K."/>
        </authorList>
    </citation>
    <scope>NUCLEOTIDE SEQUENCE [LARGE SCALE MRNA]</scope>
    <source>
        <strain>cv. Columbia</strain>
    </source>
</reference>
<reference key="4">
    <citation type="submission" date="2006-12" db="EMBL/GenBank/DDBJ databases">
        <title>Arabidopsis ORF clones.</title>
        <authorList>
            <person name="Bautista V.R."/>
            <person name="Kim C.J."/>
            <person name="Chen H."/>
            <person name="Wu S.Y."/>
            <person name="De Los Reyes C."/>
            <person name="Ecker J.R."/>
        </authorList>
    </citation>
    <scope>NUCLEOTIDE SEQUENCE [LARGE SCALE MRNA]</scope>
    <source>
        <strain>cv. Columbia</strain>
    </source>
</reference>
<gene>
    <name type="ordered locus">At1g67480</name>
    <name type="ORF">F12B7.3</name>
    <name type="ORF">T1F15.5</name>
</gene>
<sequence>MQAFALSGKKRIVNHGMCFSKGNLDLGSRLSENFMDDPLIPGLPDDVAKQCLALVPRARFPSMGSVCKKWRFVVQSKEFITVRRLAGMLEEWLYVLTMNAGGKDNRWEVMDCLGQKLSSLPPMPGPAKTGFKVVVVDGKLLVIAGCCMINGSLVASADVYQYDTCLNSWSRLADLEVARYDFACAEVNGHVYVVGGHGVDGESLSSAEVYDPETCTWTFIESLRRPRWGCFASAFNGKLYVMGGRSNFTIGNSKLLDVYNTQCGSWHGSKNGLTMVTAHVEVGKKLFCIDWKNHRKMSVFNAEDETWEVVALPLSGSSRAGFQFGKLSGKLLLFSSQEETGQCTLLYDPDASPGTQWKTSEIKLSGSCVCSVTITA</sequence>
<proteinExistence type="evidence at transcript level"/>
<evidence type="ECO:0000305" key="1"/>
<organism>
    <name type="scientific">Arabidopsis thaliana</name>
    <name type="common">Mouse-ear cress</name>
    <dbReference type="NCBI Taxonomy" id="3702"/>
    <lineage>
        <taxon>Eukaryota</taxon>
        <taxon>Viridiplantae</taxon>
        <taxon>Streptophyta</taxon>
        <taxon>Embryophyta</taxon>
        <taxon>Tracheophyta</taxon>
        <taxon>Spermatophyta</taxon>
        <taxon>Magnoliopsida</taxon>
        <taxon>eudicotyledons</taxon>
        <taxon>Gunneridae</taxon>
        <taxon>Pentapetalae</taxon>
        <taxon>rosids</taxon>
        <taxon>malvids</taxon>
        <taxon>Brassicales</taxon>
        <taxon>Brassicaceae</taxon>
        <taxon>Camelineae</taxon>
        <taxon>Arabidopsis</taxon>
    </lineage>
</organism>